<evidence type="ECO:0000255" key="1">
    <source>
        <dbReference type="HAMAP-Rule" id="MF_01363"/>
    </source>
</evidence>
<evidence type="ECO:0000305" key="2"/>
<protein>
    <recommendedName>
        <fullName evidence="1">Large ribosomal subunit protein bL21</fullName>
    </recommendedName>
    <alternativeName>
        <fullName evidence="2">50S ribosomal protein L21</fullName>
    </alternativeName>
</protein>
<gene>
    <name evidence="1" type="primary">rplU</name>
    <name type="ordered locus">Pput_0720</name>
</gene>
<dbReference type="EMBL" id="CP000712">
    <property type="protein sequence ID" value="ABQ76884.1"/>
    <property type="molecule type" value="Genomic_DNA"/>
</dbReference>
<dbReference type="SMR" id="A5VYC4"/>
<dbReference type="KEGG" id="ppf:Pput_0720"/>
<dbReference type="eggNOG" id="COG0261">
    <property type="taxonomic scope" value="Bacteria"/>
</dbReference>
<dbReference type="HOGENOM" id="CLU_061463_3_2_6"/>
<dbReference type="GO" id="GO:0005737">
    <property type="term" value="C:cytoplasm"/>
    <property type="evidence" value="ECO:0007669"/>
    <property type="project" value="UniProtKB-ARBA"/>
</dbReference>
<dbReference type="GO" id="GO:1990904">
    <property type="term" value="C:ribonucleoprotein complex"/>
    <property type="evidence" value="ECO:0007669"/>
    <property type="project" value="UniProtKB-KW"/>
</dbReference>
<dbReference type="GO" id="GO:0005840">
    <property type="term" value="C:ribosome"/>
    <property type="evidence" value="ECO:0007669"/>
    <property type="project" value="UniProtKB-KW"/>
</dbReference>
<dbReference type="GO" id="GO:0019843">
    <property type="term" value="F:rRNA binding"/>
    <property type="evidence" value="ECO:0007669"/>
    <property type="project" value="UniProtKB-UniRule"/>
</dbReference>
<dbReference type="GO" id="GO:0003735">
    <property type="term" value="F:structural constituent of ribosome"/>
    <property type="evidence" value="ECO:0007669"/>
    <property type="project" value="InterPro"/>
</dbReference>
<dbReference type="GO" id="GO:0006412">
    <property type="term" value="P:translation"/>
    <property type="evidence" value="ECO:0007669"/>
    <property type="project" value="UniProtKB-UniRule"/>
</dbReference>
<dbReference type="HAMAP" id="MF_01363">
    <property type="entry name" value="Ribosomal_bL21"/>
    <property type="match status" value="1"/>
</dbReference>
<dbReference type="InterPro" id="IPR028909">
    <property type="entry name" value="bL21-like"/>
</dbReference>
<dbReference type="InterPro" id="IPR036164">
    <property type="entry name" value="bL21-like_sf"/>
</dbReference>
<dbReference type="InterPro" id="IPR001787">
    <property type="entry name" value="Ribosomal_bL21"/>
</dbReference>
<dbReference type="InterPro" id="IPR018258">
    <property type="entry name" value="Ribosomal_bL21_CS"/>
</dbReference>
<dbReference type="NCBIfam" id="TIGR00061">
    <property type="entry name" value="L21"/>
    <property type="match status" value="1"/>
</dbReference>
<dbReference type="PANTHER" id="PTHR21349">
    <property type="entry name" value="50S RIBOSOMAL PROTEIN L21"/>
    <property type="match status" value="1"/>
</dbReference>
<dbReference type="PANTHER" id="PTHR21349:SF0">
    <property type="entry name" value="LARGE RIBOSOMAL SUBUNIT PROTEIN BL21M"/>
    <property type="match status" value="1"/>
</dbReference>
<dbReference type="Pfam" id="PF00829">
    <property type="entry name" value="Ribosomal_L21p"/>
    <property type="match status" value="1"/>
</dbReference>
<dbReference type="SUPFAM" id="SSF141091">
    <property type="entry name" value="L21p-like"/>
    <property type="match status" value="1"/>
</dbReference>
<dbReference type="PROSITE" id="PS01169">
    <property type="entry name" value="RIBOSOMAL_L21"/>
    <property type="match status" value="1"/>
</dbReference>
<keyword id="KW-0687">Ribonucleoprotein</keyword>
<keyword id="KW-0689">Ribosomal protein</keyword>
<keyword id="KW-0694">RNA-binding</keyword>
<keyword id="KW-0699">rRNA-binding</keyword>
<accession>A5VYC4</accession>
<feature type="chain" id="PRO_1000067880" description="Large ribosomal subunit protein bL21">
    <location>
        <begin position="1"/>
        <end position="104"/>
    </location>
</feature>
<proteinExistence type="inferred from homology"/>
<name>RL21_PSEP1</name>
<sequence>MSYAVIVTGGKQYKVAEGEFLKIEKLEVATGESVTFDRVLLVANGEEVTIGAPVVAGAKVVAEVVSQGRHDKVRIIKFRRRKHHMKRMGHRQWFTEIKITGIQA</sequence>
<reference key="1">
    <citation type="submission" date="2007-05" db="EMBL/GenBank/DDBJ databases">
        <title>Complete sequence of Pseudomonas putida F1.</title>
        <authorList>
            <consortium name="US DOE Joint Genome Institute"/>
            <person name="Copeland A."/>
            <person name="Lucas S."/>
            <person name="Lapidus A."/>
            <person name="Barry K."/>
            <person name="Detter J.C."/>
            <person name="Glavina del Rio T."/>
            <person name="Hammon N."/>
            <person name="Israni S."/>
            <person name="Dalin E."/>
            <person name="Tice H."/>
            <person name="Pitluck S."/>
            <person name="Chain P."/>
            <person name="Malfatti S."/>
            <person name="Shin M."/>
            <person name="Vergez L."/>
            <person name="Schmutz J."/>
            <person name="Larimer F."/>
            <person name="Land M."/>
            <person name="Hauser L."/>
            <person name="Kyrpides N."/>
            <person name="Lykidis A."/>
            <person name="Parales R."/>
            <person name="Richardson P."/>
        </authorList>
    </citation>
    <scope>NUCLEOTIDE SEQUENCE [LARGE SCALE GENOMIC DNA]</scope>
    <source>
        <strain>ATCC 700007 / DSM 6899 / JCM 31910 / BCRC 17059 / LMG 24140 / F1</strain>
    </source>
</reference>
<comment type="function">
    <text evidence="1">This protein binds to 23S rRNA in the presence of protein L20.</text>
</comment>
<comment type="subunit">
    <text evidence="1">Part of the 50S ribosomal subunit. Contacts protein L20.</text>
</comment>
<comment type="similarity">
    <text evidence="1">Belongs to the bacterial ribosomal protein bL21 family.</text>
</comment>
<organism>
    <name type="scientific">Pseudomonas putida (strain ATCC 700007 / DSM 6899 / JCM 31910 / BCRC 17059 / LMG 24140 / F1)</name>
    <dbReference type="NCBI Taxonomy" id="351746"/>
    <lineage>
        <taxon>Bacteria</taxon>
        <taxon>Pseudomonadati</taxon>
        <taxon>Pseudomonadota</taxon>
        <taxon>Gammaproteobacteria</taxon>
        <taxon>Pseudomonadales</taxon>
        <taxon>Pseudomonadaceae</taxon>
        <taxon>Pseudomonas</taxon>
    </lineage>
</organism>